<proteinExistence type="inferred from homology"/>
<feature type="chain" id="PRO_1000008018" description="Sugar fermentation stimulation protein homolog">
    <location>
        <begin position="1"/>
        <end position="235"/>
    </location>
</feature>
<gene>
    <name evidence="1" type="primary">sfsA</name>
    <name type="ordered locus">RD1_0950</name>
</gene>
<protein>
    <recommendedName>
        <fullName evidence="1">Sugar fermentation stimulation protein homolog</fullName>
    </recommendedName>
</protein>
<comment type="similarity">
    <text evidence="1">Belongs to the SfsA family.</text>
</comment>
<reference key="1">
    <citation type="journal article" date="2007" name="J. Bacteriol.">
        <title>The complete genome sequence of Roseobacter denitrificans reveals a mixotrophic rather than photosynthetic metabolism.</title>
        <authorList>
            <person name="Swingley W.D."/>
            <person name="Sadekar S."/>
            <person name="Mastrian S.D."/>
            <person name="Matthies H.J."/>
            <person name="Hao J."/>
            <person name="Ramos H."/>
            <person name="Acharya C.R."/>
            <person name="Conrad A.L."/>
            <person name="Taylor H.L."/>
            <person name="Dejesa L.C."/>
            <person name="Shah M.K."/>
            <person name="O'Huallachain M.E."/>
            <person name="Lince M.T."/>
            <person name="Blankenship R.E."/>
            <person name="Beatty J.T."/>
            <person name="Touchman J.W."/>
        </authorList>
    </citation>
    <scope>NUCLEOTIDE SEQUENCE [LARGE SCALE GENOMIC DNA]</scope>
    <source>
        <strain>ATCC 33942 / OCh 114</strain>
    </source>
</reference>
<name>SFSA_ROSDO</name>
<accession>Q16BM5</accession>
<organism>
    <name type="scientific">Roseobacter denitrificans (strain ATCC 33942 / OCh 114)</name>
    <name type="common">Erythrobacter sp. (strain OCh 114)</name>
    <name type="synonym">Roseobacter denitrificans</name>
    <dbReference type="NCBI Taxonomy" id="375451"/>
    <lineage>
        <taxon>Bacteria</taxon>
        <taxon>Pseudomonadati</taxon>
        <taxon>Pseudomonadota</taxon>
        <taxon>Alphaproteobacteria</taxon>
        <taxon>Rhodobacterales</taxon>
        <taxon>Roseobacteraceae</taxon>
        <taxon>Roseobacter</taxon>
    </lineage>
</organism>
<evidence type="ECO:0000255" key="1">
    <source>
        <dbReference type="HAMAP-Rule" id="MF_00095"/>
    </source>
</evidence>
<keyword id="KW-1185">Reference proteome</keyword>
<dbReference type="EMBL" id="CP000362">
    <property type="protein sequence ID" value="ABG30618.1"/>
    <property type="molecule type" value="Genomic_DNA"/>
</dbReference>
<dbReference type="RefSeq" id="WP_011567240.1">
    <property type="nucleotide sequence ID" value="NC_008209.1"/>
</dbReference>
<dbReference type="SMR" id="Q16BM5"/>
<dbReference type="STRING" id="375451.RD1_0950"/>
<dbReference type="KEGG" id="rde:RD1_0950"/>
<dbReference type="eggNOG" id="COG1489">
    <property type="taxonomic scope" value="Bacteria"/>
</dbReference>
<dbReference type="HOGENOM" id="CLU_052299_2_0_5"/>
<dbReference type="OrthoDB" id="9802365at2"/>
<dbReference type="Proteomes" id="UP000007029">
    <property type="component" value="Chromosome"/>
</dbReference>
<dbReference type="GO" id="GO:0003677">
    <property type="term" value="F:DNA binding"/>
    <property type="evidence" value="ECO:0007669"/>
    <property type="project" value="InterPro"/>
</dbReference>
<dbReference type="CDD" id="cd22359">
    <property type="entry name" value="SfsA-like_bacterial"/>
    <property type="match status" value="1"/>
</dbReference>
<dbReference type="Gene3D" id="2.40.50.580">
    <property type="match status" value="1"/>
</dbReference>
<dbReference type="Gene3D" id="3.40.1350.60">
    <property type="match status" value="1"/>
</dbReference>
<dbReference type="HAMAP" id="MF_00095">
    <property type="entry name" value="SfsA"/>
    <property type="match status" value="1"/>
</dbReference>
<dbReference type="InterPro" id="IPR005224">
    <property type="entry name" value="SfsA"/>
</dbReference>
<dbReference type="InterPro" id="IPR040452">
    <property type="entry name" value="SfsA_C"/>
</dbReference>
<dbReference type="InterPro" id="IPR041465">
    <property type="entry name" value="SfsA_N"/>
</dbReference>
<dbReference type="NCBIfam" id="TIGR00230">
    <property type="entry name" value="sfsA"/>
    <property type="match status" value="1"/>
</dbReference>
<dbReference type="PANTHER" id="PTHR30545">
    <property type="entry name" value="SUGAR FERMENTATION STIMULATION PROTEIN A"/>
    <property type="match status" value="1"/>
</dbReference>
<dbReference type="PANTHER" id="PTHR30545:SF2">
    <property type="entry name" value="SUGAR FERMENTATION STIMULATION PROTEIN A"/>
    <property type="match status" value="1"/>
</dbReference>
<dbReference type="Pfam" id="PF03749">
    <property type="entry name" value="SfsA"/>
    <property type="match status" value="1"/>
</dbReference>
<dbReference type="Pfam" id="PF17746">
    <property type="entry name" value="SfsA_N"/>
    <property type="match status" value="1"/>
</dbReference>
<sequence>MRFQTELVPARLTRRYKRFLADCVLDADGAEITAHCANPGSMMGLAAPGTRIWLEPNDDPKKKLKFGWRLVDHENGHFTGVDTSLPNRVLKEALVARHVETLSGYGTVRPEVKYGQNSRIDFLLSEDGLPDAYVEVKSVTLSRQTGQAEFPDSVTARGAKHLQELADMAQAGHRAIMLYLVQRTDCTSFTLAGDIDPTYAAAFRSARDRGVETLCLGTNITPQGIEVAGAIPIRL</sequence>